<proteinExistence type="evidence at protein level"/>
<keyword id="KW-0002">3D-structure</keyword>
<keyword id="KW-0808">Transferase</keyword>
<name>GST28_SCHHA</name>
<reference key="1">
    <citation type="journal article" date="1992" name="Mol. Biochem. Parasitol.">
        <title>Inter-species variation of schistosome 28-kDa glutathione S-transferases.</title>
        <authorList>
            <person name="Trottein F."/>
            <person name="Goding G."/>
            <person name="Sellin B."/>
            <person name="Gorillot I."/>
            <person name="Samaio M."/>
            <person name="Lecocq J.-P."/>
            <person name="Capron A."/>
        </authorList>
    </citation>
    <scope>NUCLEOTIDE SEQUENCE [GENOMIC DNA]</scope>
</reference>
<reference evidence="4 5" key="2">
    <citation type="journal article" date="2003" name="Biochemistry">
        <title>Crystal structure of the 28 kDa glutathione S-transferase from Schistosoma haematobium.</title>
        <authorList>
            <person name="Johnson K.A."/>
            <person name="Angelucci F."/>
            <person name="Bellelli A."/>
            <person name="Herve M."/>
            <person name="Fontaine J."/>
            <person name="Tsernoglou D."/>
            <person name="Capron A."/>
            <person name="Trottein F."/>
            <person name="Brunori M."/>
        </authorList>
    </citation>
    <scope>X-RAY CRYSTALLOGRAPHY (1.8 ANGSTROMS) IN COMPLEX WITH GLUTATHIONE</scope>
    <scope>FUNCTION</scope>
    <scope>SUBUNIT</scope>
    <scope>CATALYTIC ACTIVITY</scope>
</reference>
<reference evidence="6 7 8 9 10 11" key="3">
    <citation type="journal article" date="2006" name="J. Mol. Biol.">
        <title>Probing the mechanism of GSH activation in Schistosoma haematobium glutathione-S-transferase by site-directed mutagenesis and X-ray crystallography.</title>
        <authorList>
            <person name="Baiocco P."/>
            <person name="Gourlay L.J."/>
            <person name="Angelucci F."/>
            <person name="Fontaine J."/>
            <person name="Herve M."/>
            <person name="Miele A.E."/>
            <person name="Trottein F."/>
            <person name="Brunori M."/>
            <person name="Bellelli A."/>
        </authorList>
    </citation>
    <scope>X-RAY CRYSTALLOGRAPHY (2.3 ANGSTROMS) IN COMPLEX WITH GLUTATHIONE</scope>
    <scope>SUBUNIT</scope>
    <scope>MUTAGENESIS OF TYR-10 AND ARG-21</scope>
    <scope>CATALYTIC ACTIVITY</scope>
</reference>
<evidence type="ECO:0000269" key="1">
    <source>
    </source>
</evidence>
<evidence type="ECO:0000269" key="2">
    <source>
    </source>
</evidence>
<evidence type="ECO:0000305" key="3"/>
<evidence type="ECO:0007744" key="4">
    <source>
        <dbReference type="PDB" id="1OE7"/>
    </source>
</evidence>
<evidence type="ECO:0007744" key="5">
    <source>
        <dbReference type="PDB" id="1OE8"/>
    </source>
</evidence>
<evidence type="ECO:0007744" key="6">
    <source>
        <dbReference type="PDB" id="2C80"/>
    </source>
</evidence>
<evidence type="ECO:0007744" key="7">
    <source>
        <dbReference type="PDB" id="2C8U"/>
    </source>
</evidence>
<evidence type="ECO:0007744" key="8">
    <source>
        <dbReference type="PDB" id="2CA8"/>
    </source>
</evidence>
<evidence type="ECO:0007744" key="9">
    <source>
        <dbReference type="PDB" id="2CAI"/>
    </source>
</evidence>
<evidence type="ECO:0007744" key="10">
    <source>
        <dbReference type="PDB" id="2CAQ"/>
    </source>
</evidence>
<evidence type="ECO:0007744" key="11">
    <source>
        <dbReference type="PDB" id="2F8F"/>
    </source>
</evidence>
<evidence type="ECO:0007829" key="12">
    <source>
        <dbReference type="PDB" id="2C8U"/>
    </source>
</evidence>
<comment type="function">
    <text evidence="1">Conjugation of reduced glutathione to a wide number of exogenous and endogenous hydrophobic electrophiles.</text>
</comment>
<comment type="function">
    <text evidence="1">GST isoenzymes appear to play a central role in the parasite detoxification system. Other functions are also suspected including a role in increasing the solubility of haematin in the parasite gut.</text>
</comment>
<comment type="catalytic activity">
    <reaction evidence="1 2">
        <text>RX + glutathione = an S-substituted glutathione + a halide anion + H(+)</text>
        <dbReference type="Rhea" id="RHEA:16437"/>
        <dbReference type="ChEBI" id="CHEBI:15378"/>
        <dbReference type="ChEBI" id="CHEBI:16042"/>
        <dbReference type="ChEBI" id="CHEBI:17792"/>
        <dbReference type="ChEBI" id="CHEBI:57925"/>
        <dbReference type="ChEBI" id="CHEBI:90779"/>
        <dbReference type="EC" id="2.5.1.18"/>
    </reaction>
</comment>
<comment type="subunit">
    <text evidence="1 2">Homodimer.</text>
</comment>
<comment type="similarity">
    <text evidence="3">Belongs to the GST superfamily. Mu family.</text>
</comment>
<comment type="sequence caution" evidence="3">
    <conflict type="erroneous initiation">
        <sequence resource="EMBL-CDS" id="AAA29892"/>
    </conflict>
</comment>
<organism>
    <name type="scientific">Schistosoma haematobium</name>
    <name type="common">Blood fluke</name>
    <dbReference type="NCBI Taxonomy" id="6185"/>
    <lineage>
        <taxon>Eukaryota</taxon>
        <taxon>Metazoa</taxon>
        <taxon>Spiralia</taxon>
        <taxon>Lophotrochozoa</taxon>
        <taxon>Platyhelminthes</taxon>
        <taxon>Trematoda</taxon>
        <taxon>Digenea</taxon>
        <taxon>Strigeidida</taxon>
        <taxon>Schistosomatoidea</taxon>
        <taxon>Schistosomatidae</taxon>
        <taxon>Schistosoma</taxon>
    </lineage>
</organism>
<feature type="chain" id="PRO_0000185812" description="Glutathione S-transferase class-mu 28 kDa isozyme">
    <location>
        <begin position="1"/>
        <end position="211"/>
    </location>
</feature>
<feature type="domain" description="GST N-terminal">
    <location>
        <begin position="4"/>
        <end position="86"/>
    </location>
</feature>
<feature type="domain" description="GST C-terminal">
    <location>
        <begin position="88"/>
        <end position="211"/>
    </location>
</feature>
<feature type="binding site" evidence="1 2 4 6 8">
    <location>
        <position position="10"/>
    </location>
    <ligand>
        <name>glutathione</name>
        <dbReference type="ChEBI" id="CHEBI:57925"/>
    </ligand>
</feature>
<feature type="binding site" evidence="1 2 4 6 8 10">
    <location>
        <position position="16"/>
    </location>
    <ligand>
        <name>glutathione</name>
        <dbReference type="ChEBI" id="CHEBI:57925"/>
    </ligand>
</feature>
<feature type="binding site" evidence="1 2 4 5 6 8 10 11">
    <location>
        <position position="41"/>
    </location>
    <ligand>
        <name>glutathione</name>
        <dbReference type="ChEBI" id="CHEBI:57925"/>
    </ligand>
</feature>
<feature type="binding site" evidence="1 2 4 5 6 8 10 11">
    <location>
        <position position="45"/>
    </location>
    <ligand>
        <name>glutathione</name>
        <dbReference type="ChEBI" id="CHEBI:57925"/>
    </ligand>
</feature>
<feature type="binding site" evidence="1 2 4 5 6 8 10 11">
    <location>
        <position position="53"/>
    </location>
    <ligand>
        <name>glutathione</name>
        <dbReference type="ChEBI" id="CHEBI:57925"/>
    </ligand>
</feature>
<feature type="binding site" evidence="1 2 4 5 6 8 10 11">
    <location>
        <position position="70"/>
    </location>
    <ligand>
        <name>glutathione</name>
        <dbReference type="ChEBI" id="CHEBI:57925"/>
    </ligand>
</feature>
<feature type="binding site" evidence="1 2 4 5 6 8 10 11">
    <location>
        <position position="71"/>
    </location>
    <ligand>
        <name>glutathione</name>
        <dbReference type="ChEBI" id="CHEBI:57925"/>
    </ligand>
</feature>
<feature type="binding site" evidence="1 2 4 6 11">
    <location>
        <position position="104"/>
    </location>
    <ligand>
        <name>glutathione</name>
        <dbReference type="ChEBI" id="CHEBI:57925"/>
    </ligand>
</feature>
<feature type="mutagenesis site" description="Loss of enzyme activity." evidence="2">
    <original>Y</original>
    <variation>F</variation>
    <location>
        <position position="10"/>
    </location>
</feature>
<feature type="mutagenesis site" description="Reduces catalytic activity 12-fold." evidence="2">
    <original>R</original>
    <variation>L</variation>
    <location>
        <position position="21"/>
    </location>
</feature>
<feature type="mutagenesis site" description="Reduces catalytic activity 120-fold." evidence="2">
    <original>R</original>
    <variation>Q</variation>
    <location>
        <position position="21"/>
    </location>
</feature>
<feature type="strand" evidence="12">
    <location>
        <begin position="5"/>
        <end position="11"/>
    </location>
</feature>
<feature type="turn" evidence="12">
    <location>
        <begin position="13"/>
        <end position="17"/>
    </location>
</feature>
<feature type="helix" evidence="12">
    <location>
        <begin position="18"/>
        <end position="26"/>
    </location>
</feature>
<feature type="strand" evidence="12">
    <location>
        <begin position="32"/>
        <end position="35"/>
    </location>
</feature>
<feature type="turn" evidence="12">
    <location>
        <begin position="38"/>
        <end position="40"/>
    </location>
</feature>
<feature type="helix" evidence="12">
    <location>
        <begin position="41"/>
        <end position="44"/>
    </location>
</feature>
<feature type="helix" evidence="12">
    <location>
        <begin position="45"/>
        <end position="47"/>
    </location>
</feature>
<feature type="strand" evidence="12">
    <location>
        <begin position="53"/>
        <end position="59"/>
    </location>
</feature>
<feature type="strand" evidence="12">
    <location>
        <begin position="65"/>
        <end position="70"/>
    </location>
</feature>
<feature type="helix" evidence="12">
    <location>
        <begin position="71"/>
        <end position="81"/>
    </location>
</feature>
<feature type="helix" evidence="12">
    <location>
        <begin position="89"/>
        <end position="110"/>
    </location>
</feature>
<feature type="turn" evidence="12">
    <location>
        <begin position="111"/>
        <end position="114"/>
    </location>
</feature>
<feature type="helix" evidence="12">
    <location>
        <begin position="117"/>
        <end position="129"/>
    </location>
</feature>
<feature type="helix" evidence="12">
    <location>
        <begin position="131"/>
        <end position="144"/>
    </location>
</feature>
<feature type="strand" evidence="12">
    <location>
        <begin position="147"/>
        <end position="155"/>
    </location>
</feature>
<feature type="helix" evidence="12">
    <location>
        <begin position="158"/>
        <end position="173"/>
    </location>
</feature>
<feature type="turn" evidence="12">
    <location>
        <begin position="175"/>
        <end position="180"/>
    </location>
</feature>
<feature type="helix" evidence="12">
    <location>
        <begin position="183"/>
        <end position="195"/>
    </location>
</feature>
<feature type="helix" evidence="12">
    <location>
        <begin position="197"/>
        <end position="202"/>
    </location>
</feature>
<sequence length="211" mass="23898">MTGDHIKVIYFNGRGRAESIRMTLVAAGVNYEDERISFQDWPKIKPTIPGGRLPAVKITDNHGHVKWMVESLAIARYMAKKHHMMGGTEEEYYNVEKLIGQAEDLEHEYYKTLMKPEEEKQKIIKEILNGKVPVLLDIICESLKASTGKLAVGDKVTLADLVLIAVIDHVTDLDKEFLTGKYPEIHKHRENLLASSPRLAKYLSDRAATPF</sequence>
<dbReference type="EC" id="2.5.1.18" evidence="1 2"/>
<dbReference type="EMBL" id="M87799">
    <property type="protein sequence ID" value="AAA29892.1"/>
    <property type="status" value="ALT_INIT"/>
    <property type="molecule type" value="Genomic_DNA"/>
</dbReference>
<dbReference type="RefSeq" id="XP_012797862.1">
    <property type="nucleotide sequence ID" value="XM_012942408.1"/>
</dbReference>
<dbReference type="PDB" id="1OE7">
    <property type="method" value="X-ray"/>
    <property type="resolution" value="1.80 A"/>
    <property type="chains" value="A/B=1-211"/>
</dbReference>
<dbReference type="PDB" id="1OE8">
    <property type="method" value="X-ray"/>
    <property type="resolution" value="1.65 A"/>
    <property type="chains" value="A/B=1-211"/>
</dbReference>
<dbReference type="PDB" id="2C80">
    <property type="method" value="X-ray"/>
    <property type="resolution" value="2.30 A"/>
    <property type="chains" value="A/B=1-211"/>
</dbReference>
<dbReference type="PDB" id="2C8U">
    <property type="method" value="X-ray"/>
    <property type="resolution" value="2.00 A"/>
    <property type="chains" value="A/B=1-211"/>
</dbReference>
<dbReference type="PDB" id="2CA8">
    <property type="method" value="X-ray"/>
    <property type="resolution" value="2.49 A"/>
    <property type="chains" value="A=1-211"/>
</dbReference>
<dbReference type="PDB" id="2CAI">
    <property type="method" value="X-ray"/>
    <property type="resolution" value="2.26 A"/>
    <property type="chains" value="A/B=1-211"/>
</dbReference>
<dbReference type="PDB" id="2CAQ">
    <property type="method" value="X-ray"/>
    <property type="resolution" value="2.00 A"/>
    <property type="chains" value="A=1-211"/>
</dbReference>
<dbReference type="PDB" id="2F8F">
    <property type="method" value="X-ray"/>
    <property type="resolution" value="2.10 A"/>
    <property type="chains" value="A/B=1-211"/>
</dbReference>
<dbReference type="PDBsum" id="1OE7"/>
<dbReference type="PDBsum" id="1OE8"/>
<dbReference type="PDBsum" id="2C80"/>
<dbReference type="PDBsum" id="2C8U"/>
<dbReference type="PDBsum" id="2CA8"/>
<dbReference type="PDBsum" id="2CAI"/>
<dbReference type="PDBsum" id="2CAQ"/>
<dbReference type="PDBsum" id="2F8F"/>
<dbReference type="SMR" id="P30113"/>
<dbReference type="GeneID" id="24593871"/>
<dbReference type="KEGG" id="shx:MS3_00004396"/>
<dbReference type="CTD" id="24593871"/>
<dbReference type="EvolutionaryTrace" id="P30113"/>
<dbReference type="GO" id="GO:0004364">
    <property type="term" value="F:glutathione transferase activity"/>
    <property type="evidence" value="ECO:0007669"/>
    <property type="project" value="UniProtKB-EC"/>
</dbReference>
<dbReference type="GO" id="GO:0006749">
    <property type="term" value="P:glutathione metabolic process"/>
    <property type="evidence" value="ECO:0007669"/>
    <property type="project" value="TreeGrafter"/>
</dbReference>
<dbReference type="CDD" id="cd03192">
    <property type="entry name" value="GST_C_Sigma_like"/>
    <property type="match status" value="1"/>
</dbReference>
<dbReference type="CDD" id="cd03039">
    <property type="entry name" value="GST_N_Sigma_like"/>
    <property type="match status" value="1"/>
</dbReference>
<dbReference type="Gene3D" id="1.20.1050.10">
    <property type="match status" value="1"/>
</dbReference>
<dbReference type="Gene3D" id="3.40.30.10">
    <property type="entry name" value="Glutaredoxin"/>
    <property type="match status" value="1"/>
</dbReference>
<dbReference type="InterPro" id="IPR010987">
    <property type="entry name" value="Glutathione-S-Trfase_C-like"/>
</dbReference>
<dbReference type="InterPro" id="IPR036282">
    <property type="entry name" value="Glutathione-S-Trfase_C_sf"/>
</dbReference>
<dbReference type="InterPro" id="IPR040079">
    <property type="entry name" value="Glutathione_S-Trfase"/>
</dbReference>
<dbReference type="InterPro" id="IPR004045">
    <property type="entry name" value="Glutathione_S-Trfase_N"/>
</dbReference>
<dbReference type="InterPro" id="IPR004046">
    <property type="entry name" value="GST_C"/>
</dbReference>
<dbReference type="InterPro" id="IPR050213">
    <property type="entry name" value="GST_superfamily"/>
</dbReference>
<dbReference type="InterPro" id="IPR036249">
    <property type="entry name" value="Thioredoxin-like_sf"/>
</dbReference>
<dbReference type="PANTHER" id="PTHR11571">
    <property type="entry name" value="GLUTATHIONE S-TRANSFERASE"/>
    <property type="match status" value="1"/>
</dbReference>
<dbReference type="PANTHER" id="PTHR11571:SF224">
    <property type="entry name" value="HEMATOPOIETIC PROSTAGLANDIN D SYNTHASE"/>
    <property type="match status" value="1"/>
</dbReference>
<dbReference type="Pfam" id="PF00043">
    <property type="entry name" value="GST_C"/>
    <property type="match status" value="1"/>
</dbReference>
<dbReference type="Pfam" id="PF02798">
    <property type="entry name" value="GST_N"/>
    <property type="match status" value="1"/>
</dbReference>
<dbReference type="SFLD" id="SFLDG01205">
    <property type="entry name" value="AMPS.1"/>
    <property type="match status" value="1"/>
</dbReference>
<dbReference type="SFLD" id="SFLDS00019">
    <property type="entry name" value="Glutathione_Transferase_(cytos"/>
    <property type="match status" value="1"/>
</dbReference>
<dbReference type="SUPFAM" id="SSF47616">
    <property type="entry name" value="GST C-terminal domain-like"/>
    <property type="match status" value="1"/>
</dbReference>
<dbReference type="SUPFAM" id="SSF52833">
    <property type="entry name" value="Thioredoxin-like"/>
    <property type="match status" value="1"/>
</dbReference>
<dbReference type="PROSITE" id="PS50405">
    <property type="entry name" value="GST_CTER"/>
    <property type="match status" value="1"/>
</dbReference>
<dbReference type="PROSITE" id="PS50404">
    <property type="entry name" value="GST_NTER"/>
    <property type="match status" value="1"/>
</dbReference>
<accession>P30113</accession>
<protein>
    <recommendedName>
        <fullName>Glutathione S-transferase class-mu 28 kDa isozyme</fullName>
        <shortName>GST 28</shortName>
        <ecNumber evidence="1 2">2.5.1.18</ecNumber>
    </recommendedName>
    <alternativeName>
        <fullName>Sb28GST</fullName>
    </alternativeName>
</protein>